<comment type="function">
    <text evidence="1">Catalyzes the reversible interconversion of serine and glycine with tetrahydrofolate (THF) serving as the one-carbon carrier. This reaction serves as the major source of one-carbon groups required for the biosynthesis of purines, thymidylate, methionine, and other important biomolecules. Also exhibits THF-independent aldolase activity toward beta-hydroxyamino acids, producing glycine and aldehydes, via a retro-aldol mechanism.</text>
</comment>
<comment type="catalytic activity">
    <reaction evidence="1">
        <text>(6R)-5,10-methylene-5,6,7,8-tetrahydrofolate + glycine + H2O = (6S)-5,6,7,8-tetrahydrofolate + L-serine</text>
        <dbReference type="Rhea" id="RHEA:15481"/>
        <dbReference type="ChEBI" id="CHEBI:15377"/>
        <dbReference type="ChEBI" id="CHEBI:15636"/>
        <dbReference type="ChEBI" id="CHEBI:33384"/>
        <dbReference type="ChEBI" id="CHEBI:57305"/>
        <dbReference type="ChEBI" id="CHEBI:57453"/>
        <dbReference type="EC" id="2.1.2.1"/>
    </reaction>
</comment>
<comment type="cofactor">
    <cofactor evidence="1">
        <name>pyridoxal 5'-phosphate</name>
        <dbReference type="ChEBI" id="CHEBI:597326"/>
    </cofactor>
</comment>
<comment type="pathway">
    <text evidence="1">One-carbon metabolism; tetrahydrofolate interconversion.</text>
</comment>
<comment type="pathway">
    <text evidence="1">Amino-acid biosynthesis; glycine biosynthesis; glycine from L-serine: step 1/1.</text>
</comment>
<comment type="subunit">
    <text evidence="1">Homodimer.</text>
</comment>
<comment type="subcellular location">
    <subcellularLocation>
        <location evidence="1">Cytoplasm</location>
    </subcellularLocation>
</comment>
<comment type="similarity">
    <text evidence="1">Belongs to the SHMT family.</text>
</comment>
<accession>B8J189</accession>
<feature type="chain" id="PRO_1000195443" description="Serine hydroxymethyltransferase">
    <location>
        <begin position="1"/>
        <end position="414"/>
    </location>
</feature>
<feature type="binding site" evidence="1">
    <location>
        <position position="117"/>
    </location>
    <ligand>
        <name>(6S)-5,6,7,8-tetrahydrofolate</name>
        <dbReference type="ChEBI" id="CHEBI:57453"/>
    </ligand>
</feature>
<feature type="binding site" evidence="1">
    <location>
        <begin position="121"/>
        <end position="123"/>
    </location>
    <ligand>
        <name>(6S)-5,6,7,8-tetrahydrofolate</name>
        <dbReference type="ChEBI" id="CHEBI:57453"/>
    </ligand>
</feature>
<feature type="binding site" evidence="1">
    <location>
        <begin position="349"/>
        <end position="351"/>
    </location>
    <ligand>
        <name>(6S)-5,6,7,8-tetrahydrofolate</name>
        <dbReference type="ChEBI" id="CHEBI:57453"/>
    </ligand>
</feature>
<feature type="site" description="Plays an important role in substrate specificity" evidence="1">
    <location>
        <position position="225"/>
    </location>
</feature>
<feature type="modified residue" description="N6-(pyridoxal phosphate)lysine" evidence="1">
    <location>
        <position position="226"/>
    </location>
</feature>
<sequence length="414" mass="44637">MDEILLQDPEIAKAIALESQRQMGKLELIASENIVSTAVREAQGSVLTNKYAEGYPGKRYYGGCEYVDMVETLAQERAKLLFDAQYVNVQPHSGSQANMAAYLAVLKPGDTILGMDLSHGGHLTHGSPVNFSGRLFKIISYGVQRETGRIDYDDVAAKAREHKPSVIVAGASAYPRAIDFARFRAIADEVGAKLVVDMAHIAGLVAAGLHQSPVPHAHITTTTTHKTLRGPRGGMILSTEDMGKTLNSQIFPGIQGGPLMHVIAAKAVALGEALHPAFKVYQQQVLDNAATLAACLTEAGYDLVSGGTDNHLMLVDLTSRDITGKDAEIALDTAGITVNKNTVPFETRSPFVTSGIRLGTAALTTRGMKQEHMRTVGQFIIAALEKRNDTAELEKIRKNVEEFAHQFPLFAHLA</sequence>
<name>GLYA_DESDA</name>
<gene>
    <name evidence="1" type="primary">glyA</name>
    <name type="ordered locus">Ddes_1617</name>
</gene>
<proteinExistence type="inferred from homology"/>
<dbReference type="EC" id="2.1.2.1" evidence="1"/>
<dbReference type="EMBL" id="CP001358">
    <property type="protein sequence ID" value="ACL49516.1"/>
    <property type="molecule type" value="Genomic_DNA"/>
</dbReference>
<dbReference type="SMR" id="B8J189"/>
<dbReference type="STRING" id="525146.Ddes_1617"/>
<dbReference type="KEGG" id="dds:Ddes_1617"/>
<dbReference type="eggNOG" id="COG0112">
    <property type="taxonomic scope" value="Bacteria"/>
</dbReference>
<dbReference type="HOGENOM" id="CLU_022477_2_1_7"/>
<dbReference type="UniPathway" id="UPA00193"/>
<dbReference type="UniPathway" id="UPA00288">
    <property type="reaction ID" value="UER01023"/>
</dbReference>
<dbReference type="GO" id="GO:0005829">
    <property type="term" value="C:cytosol"/>
    <property type="evidence" value="ECO:0007669"/>
    <property type="project" value="TreeGrafter"/>
</dbReference>
<dbReference type="GO" id="GO:0004372">
    <property type="term" value="F:glycine hydroxymethyltransferase activity"/>
    <property type="evidence" value="ECO:0007669"/>
    <property type="project" value="UniProtKB-UniRule"/>
</dbReference>
<dbReference type="GO" id="GO:0030170">
    <property type="term" value="F:pyridoxal phosphate binding"/>
    <property type="evidence" value="ECO:0007669"/>
    <property type="project" value="UniProtKB-UniRule"/>
</dbReference>
<dbReference type="GO" id="GO:0019264">
    <property type="term" value="P:glycine biosynthetic process from serine"/>
    <property type="evidence" value="ECO:0007669"/>
    <property type="project" value="UniProtKB-UniRule"/>
</dbReference>
<dbReference type="GO" id="GO:0035999">
    <property type="term" value="P:tetrahydrofolate interconversion"/>
    <property type="evidence" value="ECO:0007669"/>
    <property type="project" value="UniProtKB-UniRule"/>
</dbReference>
<dbReference type="CDD" id="cd00378">
    <property type="entry name" value="SHMT"/>
    <property type="match status" value="1"/>
</dbReference>
<dbReference type="FunFam" id="3.40.640.10:FF:000001">
    <property type="entry name" value="Serine hydroxymethyltransferase"/>
    <property type="match status" value="1"/>
</dbReference>
<dbReference type="FunFam" id="3.90.1150.10:FF:000003">
    <property type="entry name" value="Serine hydroxymethyltransferase"/>
    <property type="match status" value="1"/>
</dbReference>
<dbReference type="Gene3D" id="3.90.1150.10">
    <property type="entry name" value="Aspartate Aminotransferase, domain 1"/>
    <property type="match status" value="1"/>
</dbReference>
<dbReference type="Gene3D" id="3.40.640.10">
    <property type="entry name" value="Type I PLP-dependent aspartate aminotransferase-like (Major domain)"/>
    <property type="match status" value="1"/>
</dbReference>
<dbReference type="HAMAP" id="MF_00051">
    <property type="entry name" value="SHMT"/>
    <property type="match status" value="1"/>
</dbReference>
<dbReference type="InterPro" id="IPR015424">
    <property type="entry name" value="PyrdxlP-dep_Trfase"/>
</dbReference>
<dbReference type="InterPro" id="IPR015421">
    <property type="entry name" value="PyrdxlP-dep_Trfase_major"/>
</dbReference>
<dbReference type="InterPro" id="IPR015422">
    <property type="entry name" value="PyrdxlP-dep_Trfase_small"/>
</dbReference>
<dbReference type="InterPro" id="IPR001085">
    <property type="entry name" value="Ser_HO-MeTrfase"/>
</dbReference>
<dbReference type="InterPro" id="IPR049943">
    <property type="entry name" value="Ser_HO-MeTrfase-like"/>
</dbReference>
<dbReference type="InterPro" id="IPR019798">
    <property type="entry name" value="Ser_HO-MeTrfase_PLP_BS"/>
</dbReference>
<dbReference type="InterPro" id="IPR039429">
    <property type="entry name" value="SHMT-like_dom"/>
</dbReference>
<dbReference type="NCBIfam" id="NF000586">
    <property type="entry name" value="PRK00011.1"/>
    <property type="match status" value="1"/>
</dbReference>
<dbReference type="PANTHER" id="PTHR11680">
    <property type="entry name" value="SERINE HYDROXYMETHYLTRANSFERASE"/>
    <property type="match status" value="1"/>
</dbReference>
<dbReference type="PANTHER" id="PTHR11680:SF50">
    <property type="entry name" value="SERINE HYDROXYMETHYLTRANSFERASE"/>
    <property type="match status" value="1"/>
</dbReference>
<dbReference type="Pfam" id="PF00464">
    <property type="entry name" value="SHMT"/>
    <property type="match status" value="1"/>
</dbReference>
<dbReference type="PIRSF" id="PIRSF000412">
    <property type="entry name" value="SHMT"/>
    <property type="match status" value="1"/>
</dbReference>
<dbReference type="SUPFAM" id="SSF53383">
    <property type="entry name" value="PLP-dependent transferases"/>
    <property type="match status" value="1"/>
</dbReference>
<dbReference type="PROSITE" id="PS00096">
    <property type="entry name" value="SHMT"/>
    <property type="match status" value="1"/>
</dbReference>
<keyword id="KW-0028">Amino-acid biosynthesis</keyword>
<keyword id="KW-0963">Cytoplasm</keyword>
<keyword id="KW-0554">One-carbon metabolism</keyword>
<keyword id="KW-0663">Pyridoxal phosphate</keyword>
<keyword id="KW-0808">Transferase</keyword>
<reference key="1">
    <citation type="submission" date="2009-01" db="EMBL/GenBank/DDBJ databases">
        <title>Complete sequence of Desulfovibrio desulfuricans subsp. desulfuricans str. ATCC 27774.</title>
        <authorList>
            <consortium name="US DOE Joint Genome Institute"/>
            <person name="Lucas S."/>
            <person name="Copeland A."/>
            <person name="Lapidus A."/>
            <person name="Glavina del Rio T."/>
            <person name="Tice H."/>
            <person name="Bruce D."/>
            <person name="Goodwin L."/>
            <person name="Pitluck S."/>
            <person name="Sims D."/>
            <person name="Lu M."/>
            <person name="Kiss H."/>
            <person name="Meineke L."/>
            <person name="Brettin T."/>
            <person name="Detter J.C."/>
            <person name="Han C."/>
            <person name="Larimer F."/>
            <person name="Land M."/>
            <person name="Hauser L."/>
            <person name="Kyrpides N."/>
            <person name="Ovchinnikova G."/>
            <person name="Hazen T.C."/>
        </authorList>
    </citation>
    <scope>NUCLEOTIDE SEQUENCE [LARGE SCALE GENOMIC DNA]</scope>
    <source>
        <strain>ATCC 27774 / DSM 6949 / MB</strain>
    </source>
</reference>
<evidence type="ECO:0000255" key="1">
    <source>
        <dbReference type="HAMAP-Rule" id="MF_00051"/>
    </source>
</evidence>
<protein>
    <recommendedName>
        <fullName evidence="1">Serine hydroxymethyltransferase</fullName>
        <shortName evidence="1">SHMT</shortName>
        <shortName evidence="1">Serine methylase</shortName>
        <ecNumber evidence="1">2.1.2.1</ecNumber>
    </recommendedName>
</protein>
<organism>
    <name type="scientific">Desulfovibrio desulfuricans (strain ATCC 27774 / DSM 6949 / MB)</name>
    <dbReference type="NCBI Taxonomy" id="525146"/>
    <lineage>
        <taxon>Bacteria</taxon>
        <taxon>Pseudomonadati</taxon>
        <taxon>Thermodesulfobacteriota</taxon>
        <taxon>Desulfovibrionia</taxon>
        <taxon>Desulfovibrionales</taxon>
        <taxon>Desulfovibrionaceae</taxon>
        <taxon>Desulfovibrio</taxon>
    </lineage>
</organism>